<accession>Q8FZE8</accession>
<accession>G0KC19</accession>
<evidence type="ECO:0000255" key="1">
    <source>
        <dbReference type="HAMAP-Rule" id="MF_01334"/>
    </source>
</evidence>
<evidence type="ECO:0000305" key="2"/>
<gene>
    <name evidence="1" type="primary">rplY</name>
    <name evidence="1" type="synonym">ctc</name>
    <name type="ordered locus">BR1535</name>
    <name type="ordered locus">BS1330_I1529</name>
</gene>
<comment type="function">
    <text evidence="1">This is one of the proteins that binds to the 5S RNA in the ribosome where it forms part of the central protuberance.</text>
</comment>
<comment type="subunit">
    <text evidence="1">Part of the 50S ribosomal subunit; part of the 5S rRNA/L5/L18/L25 subcomplex. Contacts the 5S rRNA. Binds to the 5S rRNA independently of L5 and L18.</text>
</comment>
<comment type="similarity">
    <text evidence="1">Belongs to the bacterial ribosomal protein bL25 family. CTC subfamily.</text>
</comment>
<protein>
    <recommendedName>
        <fullName evidence="1">Large ribosomal subunit protein bL25</fullName>
    </recommendedName>
    <alternativeName>
        <fullName evidence="2">50S ribosomal protein L25</fullName>
    </alternativeName>
    <alternativeName>
        <fullName evidence="1">General stress protein CTC</fullName>
    </alternativeName>
</protein>
<keyword id="KW-0687">Ribonucleoprotein</keyword>
<keyword id="KW-0689">Ribosomal protein</keyword>
<keyword id="KW-0694">RNA-binding</keyword>
<keyword id="KW-0699">rRNA-binding</keyword>
<sequence length="207" mass="22383">MSETYVLKADLRTRVGKGSSRELRRNGQIPAVIYGDKQEPLAIAVSYKEIFYKIHGGGFKTTVATIEVDGKKIQVLPKDYQLDPVRDFPQHVDFLRVSAKSVVHVNVPVHFKNEEAAPGIKRGGVLNVVRHDVELIVPANAIPEALEIDLSGLEIGDSVHISAVKLPKGATPAIQDRDFTIATIAAPAGLKSEENAEGAAEEAKDGE</sequence>
<proteinExistence type="inferred from homology"/>
<dbReference type="EMBL" id="AE014291">
    <property type="protein sequence ID" value="AAN30445.1"/>
    <property type="molecule type" value="Genomic_DNA"/>
</dbReference>
<dbReference type="EMBL" id="CP002997">
    <property type="protein sequence ID" value="AEM18861.1"/>
    <property type="molecule type" value="Genomic_DNA"/>
</dbReference>
<dbReference type="RefSeq" id="WP_002964640.1">
    <property type="nucleotide sequence ID" value="NZ_KN046804.1"/>
</dbReference>
<dbReference type="SMR" id="Q8FZE8"/>
<dbReference type="KEGG" id="bms:BR1535"/>
<dbReference type="KEGG" id="bsi:BS1330_I1529"/>
<dbReference type="PATRIC" id="fig|204722.21.peg.1824"/>
<dbReference type="HOGENOM" id="CLU_075939_0_0_5"/>
<dbReference type="PhylomeDB" id="Q8FZE8"/>
<dbReference type="Proteomes" id="UP000007104">
    <property type="component" value="Chromosome I"/>
</dbReference>
<dbReference type="GO" id="GO:0022625">
    <property type="term" value="C:cytosolic large ribosomal subunit"/>
    <property type="evidence" value="ECO:0007669"/>
    <property type="project" value="TreeGrafter"/>
</dbReference>
<dbReference type="GO" id="GO:0008097">
    <property type="term" value="F:5S rRNA binding"/>
    <property type="evidence" value="ECO:0007669"/>
    <property type="project" value="InterPro"/>
</dbReference>
<dbReference type="GO" id="GO:0003735">
    <property type="term" value="F:structural constituent of ribosome"/>
    <property type="evidence" value="ECO:0007669"/>
    <property type="project" value="InterPro"/>
</dbReference>
<dbReference type="GO" id="GO:0006412">
    <property type="term" value="P:translation"/>
    <property type="evidence" value="ECO:0007669"/>
    <property type="project" value="UniProtKB-UniRule"/>
</dbReference>
<dbReference type="CDD" id="cd00495">
    <property type="entry name" value="Ribosomal_L25_TL5_CTC"/>
    <property type="match status" value="1"/>
</dbReference>
<dbReference type="Gene3D" id="2.170.120.20">
    <property type="entry name" value="Ribosomal protein L25, beta domain"/>
    <property type="match status" value="1"/>
</dbReference>
<dbReference type="Gene3D" id="2.40.240.10">
    <property type="entry name" value="Ribosomal Protein L25, Chain P"/>
    <property type="match status" value="1"/>
</dbReference>
<dbReference type="HAMAP" id="MF_01334">
    <property type="entry name" value="Ribosomal_bL25_CTC"/>
    <property type="match status" value="1"/>
</dbReference>
<dbReference type="InterPro" id="IPR020056">
    <property type="entry name" value="Rbsml_bL25/Gln-tRNA_synth_N"/>
</dbReference>
<dbReference type="InterPro" id="IPR011035">
    <property type="entry name" value="Ribosomal_bL25/Gln-tRNA_synth"/>
</dbReference>
<dbReference type="InterPro" id="IPR020057">
    <property type="entry name" value="Ribosomal_bL25_b-dom"/>
</dbReference>
<dbReference type="InterPro" id="IPR037121">
    <property type="entry name" value="Ribosomal_bL25_C"/>
</dbReference>
<dbReference type="InterPro" id="IPR001021">
    <property type="entry name" value="Ribosomal_bL25_long"/>
</dbReference>
<dbReference type="InterPro" id="IPR029751">
    <property type="entry name" value="Ribosomal_L25_dom"/>
</dbReference>
<dbReference type="InterPro" id="IPR020930">
    <property type="entry name" value="Ribosomal_uL5_bac-type"/>
</dbReference>
<dbReference type="NCBIfam" id="TIGR00731">
    <property type="entry name" value="bL25_bact_ctc"/>
    <property type="match status" value="1"/>
</dbReference>
<dbReference type="NCBIfam" id="NF004128">
    <property type="entry name" value="PRK05618.1-2"/>
    <property type="match status" value="1"/>
</dbReference>
<dbReference type="NCBIfam" id="NF004612">
    <property type="entry name" value="PRK05943.1"/>
    <property type="match status" value="1"/>
</dbReference>
<dbReference type="PANTHER" id="PTHR33284">
    <property type="entry name" value="RIBOSOMAL PROTEIN L25/GLN-TRNA SYNTHETASE, ANTI-CODON-BINDING DOMAIN-CONTAINING PROTEIN"/>
    <property type="match status" value="1"/>
</dbReference>
<dbReference type="PANTHER" id="PTHR33284:SF1">
    <property type="entry name" value="RIBOSOMAL PROTEIN L25_GLN-TRNA SYNTHETASE, ANTI-CODON-BINDING DOMAIN-CONTAINING PROTEIN"/>
    <property type="match status" value="1"/>
</dbReference>
<dbReference type="Pfam" id="PF01386">
    <property type="entry name" value="Ribosomal_L25p"/>
    <property type="match status" value="1"/>
</dbReference>
<dbReference type="Pfam" id="PF14693">
    <property type="entry name" value="Ribosomal_TL5_C"/>
    <property type="match status" value="1"/>
</dbReference>
<dbReference type="SUPFAM" id="SSF50715">
    <property type="entry name" value="Ribosomal protein L25-like"/>
    <property type="match status" value="1"/>
</dbReference>
<organism>
    <name type="scientific">Brucella suis biovar 1 (strain 1330)</name>
    <dbReference type="NCBI Taxonomy" id="204722"/>
    <lineage>
        <taxon>Bacteria</taxon>
        <taxon>Pseudomonadati</taxon>
        <taxon>Pseudomonadota</taxon>
        <taxon>Alphaproteobacteria</taxon>
        <taxon>Hyphomicrobiales</taxon>
        <taxon>Brucellaceae</taxon>
        <taxon>Brucella/Ochrobactrum group</taxon>
        <taxon>Brucella</taxon>
    </lineage>
</organism>
<feature type="chain" id="PRO_0000181526" description="Large ribosomal subunit protein bL25">
    <location>
        <begin position="1"/>
        <end position="207"/>
    </location>
</feature>
<name>RL25_BRUSU</name>
<reference key="1">
    <citation type="journal article" date="2002" name="Proc. Natl. Acad. Sci. U.S.A.">
        <title>The Brucella suis genome reveals fundamental similarities between animal and plant pathogens and symbionts.</title>
        <authorList>
            <person name="Paulsen I.T."/>
            <person name="Seshadri R."/>
            <person name="Nelson K.E."/>
            <person name="Eisen J.A."/>
            <person name="Heidelberg J.F."/>
            <person name="Read T.D."/>
            <person name="Dodson R.J."/>
            <person name="Umayam L.A."/>
            <person name="Brinkac L.M."/>
            <person name="Beanan M.J."/>
            <person name="Daugherty S.C."/>
            <person name="DeBoy R.T."/>
            <person name="Durkin A.S."/>
            <person name="Kolonay J.F."/>
            <person name="Madupu R."/>
            <person name="Nelson W.C."/>
            <person name="Ayodeji B."/>
            <person name="Kraul M."/>
            <person name="Shetty J."/>
            <person name="Malek J.A."/>
            <person name="Van Aken S.E."/>
            <person name="Riedmuller S."/>
            <person name="Tettelin H."/>
            <person name="Gill S.R."/>
            <person name="White O."/>
            <person name="Salzberg S.L."/>
            <person name="Hoover D.L."/>
            <person name="Lindler L.E."/>
            <person name="Halling S.M."/>
            <person name="Boyle S.M."/>
            <person name="Fraser C.M."/>
        </authorList>
    </citation>
    <scope>NUCLEOTIDE SEQUENCE [LARGE SCALE GENOMIC DNA]</scope>
    <source>
        <strain>1330</strain>
    </source>
</reference>
<reference key="2">
    <citation type="journal article" date="2011" name="J. Bacteriol.">
        <title>Revised genome sequence of Brucella suis 1330.</title>
        <authorList>
            <person name="Tae H."/>
            <person name="Shallom S."/>
            <person name="Settlage R."/>
            <person name="Preston D."/>
            <person name="Adams L.G."/>
            <person name="Garner H.R."/>
        </authorList>
    </citation>
    <scope>NUCLEOTIDE SEQUENCE [LARGE SCALE GENOMIC DNA]</scope>
    <source>
        <strain>1330</strain>
    </source>
</reference>